<proteinExistence type="inferred from homology"/>
<keyword id="KW-0030">Aminoacyl-tRNA synthetase</keyword>
<keyword id="KW-0067">ATP-binding</keyword>
<keyword id="KW-0963">Cytoplasm</keyword>
<keyword id="KW-0436">Ligase</keyword>
<keyword id="KW-0547">Nucleotide-binding</keyword>
<keyword id="KW-0648">Protein biosynthesis</keyword>
<feature type="chain" id="PRO_1000051434" description="Asparagine--tRNA ligase">
    <location>
        <begin position="1"/>
        <end position="466"/>
    </location>
</feature>
<gene>
    <name evidence="1" type="primary">asnS</name>
    <name type="ordered locus">SG1015</name>
</gene>
<comment type="catalytic activity">
    <reaction evidence="1">
        <text>tRNA(Asn) + L-asparagine + ATP = L-asparaginyl-tRNA(Asn) + AMP + diphosphate + H(+)</text>
        <dbReference type="Rhea" id="RHEA:11180"/>
        <dbReference type="Rhea" id="RHEA-COMP:9659"/>
        <dbReference type="Rhea" id="RHEA-COMP:9674"/>
        <dbReference type="ChEBI" id="CHEBI:15378"/>
        <dbReference type="ChEBI" id="CHEBI:30616"/>
        <dbReference type="ChEBI" id="CHEBI:33019"/>
        <dbReference type="ChEBI" id="CHEBI:58048"/>
        <dbReference type="ChEBI" id="CHEBI:78442"/>
        <dbReference type="ChEBI" id="CHEBI:78515"/>
        <dbReference type="ChEBI" id="CHEBI:456215"/>
        <dbReference type="EC" id="6.1.1.22"/>
    </reaction>
</comment>
<comment type="subunit">
    <text evidence="1">Homodimer.</text>
</comment>
<comment type="subcellular location">
    <subcellularLocation>
        <location evidence="1">Cytoplasm</location>
    </subcellularLocation>
</comment>
<comment type="similarity">
    <text evidence="1">Belongs to the class-II aminoacyl-tRNA synthetase family.</text>
</comment>
<dbReference type="EC" id="6.1.1.22" evidence="1"/>
<dbReference type="EMBL" id="AP008232">
    <property type="protein sequence ID" value="BAE74290.1"/>
    <property type="molecule type" value="Genomic_DNA"/>
</dbReference>
<dbReference type="RefSeq" id="WP_011410875.1">
    <property type="nucleotide sequence ID" value="NC_007712.1"/>
</dbReference>
<dbReference type="SMR" id="Q2NU85"/>
<dbReference type="STRING" id="343509.SG1015"/>
<dbReference type="KEGG" id="sgl:SG1015"/>
<dbReference type="eggNOG" id="COG0017">
    <property type="taxonomic scope" value="Bacteria"/>
</dbReference>
<dbReference type="HOGENOM" id="CLU_004553_2_0_6"/>
<dbReference type="OrthoDB" id="9762036at2"/>
<dbReference type="Proteomes" id="UP000001932">
    <property type="component" value="Chromosome"/>
</dbReference>
<dbReference type="GO" id="GO:0005737">
    <property type="term" value="C:cytoplasm"/>
    <property type="evidence" value="ECO:0007669"/>
    <property type="project" value="UniProtKB-SubCell"/>
</dbReference>
<dbReference type="GO" id="GO:0004816">
    <property type="term" value="F:asparagine-tRNA ligase activity"/>
    <property type="evidence" value="ECO:0007669"/>
    <property type="project" value="UniProtKB-UniRule"/>
</dbReference>
<dbReference type="GO" id="GO:0005524">
    <property type="term" value="F:ATP binding"/>
    <property type="evidence" value="ECO:0007669"/>
    <property type="project" value="UniProtKB-UniRule"/>
</dbReference>
<dbReference type="GO" id="GO:0003676">
    <property type="term" value="F:nucleic acid binding"/>
    <property type="evidence" value="ECO:0007669"/>
    <property type="project" value="InterPro"/>
</dbReference>
<dbReference type="GO" id="GO:0006421">
    <property type="term" value="P:asparaginyl-tRNA aminoacylation"/>
    <property type="evidence" value="ECO:0007669"/>
    <property type="project" value="UniProtKB-UniRule"/>
</dbReference>
<dbReference type="CDD" id="cd00776">
    <property type="entry name" value="AsxRS_core"/>
    <property type="match status" value="1"/>
</dbReference>
<dbReference type="CDD" id="cd04318">
    <property type="entry name" value="EcAsnRS_like_N"/>
    <property type="match status" value="1"/>
</dbReference>
<dbReference type="FunFam" id="3.30.930.10:FF:000016">
    <property type="entry name" value="Asparagine--tRNA ligase"/>
    <property type="match status" value="1"/>
</dbReference>
<dbReference type="Gene3D" id="3.30.930.10">
    <property type="entry name" value="Bira Bifunctional Protein, Domain 2"/>
    <property type="match status" value="1"/>
</dbReference>
<dbReference type="Gene3D" id="2.40.50.140">
    <property type="entry name" value="Nucleic acid-binding proteins"/>
    <property type="match status" value="1"/>
</dbReference>
<dbReference type="HAMAP" id="MF_00534">
    <property type="entry name" value="Asn_tRNA_synth"/>
    <property type="match status" value="1"/>
</dbReference>
<dbReference type="InterPro" id="IPR004364">
    <property type="entry name" value="Aa-tRNA-synt_II"/>
</dbReference>
<dbReference type="InterPro" id="IPR006195">
    <property type="entry name" value="aa-tRNA-synth_II"/>
</dbReference>
<dbReference type="InterPro" id="IPR045864">
    <property type="entry name" value="aa-tRNA-synth_II/BPL/LPL"/>
</dbReference>
<dbReference type="InterPro" id="IPR004522">
    <property type="entry name" value="Asn-tRNA-ligase"/>
</dbReference>
<dbReference type="InterPro" id="IPR002312">
    <property type="entry name" value="Asp/Asn-tRNA-synth_IIb"/>
</dbReference>
<dbReference type="InterPro" id="IPR012340">
    <property type="entry name" value="NA-bd_OB-fold"/>
</dbReference>
<dbReference type="InterPro" id="IPR004365">
    <property type="entry name" value="NA-bd_OB_tRNA"/>
</dbReference>
<dbReference type="NCBIfam" id="TIGR00457">
    <property type="entry name" value="asnS"/>
    <property type="match status" value="1"/>
</dbReference>
<dbReference type="NCBIfam" id="NF003037">
    <property type="entry name" value="PRK03932.1"/>
    <property type="match status" value="1"/>
</dbReference>
<dbReference type="PANTHER" id="PTHR22594:SF34">
    <property type="entry name" value="ASPARAGINE--TRNA LIGASE, MITOCHONDRIAL-RELATED"/>
    <property type="match status" value="1"/>
</dbReference>
<dbReference type="PANTHER" id="PTHR22594">
    <property type="entry name" value="ASPARTYL/LYSYL-TRNA SYNTHETASE"/>
    <property type="match status" value="1"/>
</dbReference>
<dbReference type="Pfam" id="PF00152">
    <property type="entry name" value="tRNA-synt_2"/>
    <property type="match status" value="1"/>
</dbReference>
<dbReference type="Pfam" id="PF01336">
    <property type="entry name" value="tRNA_anti-codon"/>
    <property type="match status" value="1"/>
</dbReference>
<dbReference type="PRINTS" id="PR01042">
    <property type="entry name" value="TRNASYNTHASP"/>
</dbReference>
<dbReference type="SUPFAM" id="SSF55681">
    <property type="entry name" value="Class II aaRS and biotin synthetases"/>
    <property type="match status" value="1"/>
</dbReference>
<dbReference type="SUPFAM" id="SSF50249">
    <property type="entry name" value="Nucleic acid-binding proteins"/>
    <property type="match status" value="1"/>
</dbReference>
<dbReference type="PROSITE" id="PS50862">
    <property type="entry name" value="AA_TRNA_LIGASE_II"/>
    <property type="match status" value="1"/>
</dbReference>
<organism>
    <name type="scientific">Sodalis glossinidius (strain morsitans)</name>
    <dbReference type="NCBI Taxonomy" id="343509"/>
    <lineage>
        <taxon>Bacteria</taxon>
        <taxon>Pseudomonadati</taxon>
        <taxon>Pseudomonadota</taxon>
        <taxon>Gammaproteobacteria</taxon>
        <taxon>Enterobacterales</taxon>
        <taxon>Bruguierivoracaceae</taxon>
        <taxon>Sodalis</taxon>
    </lineage>
</organism>
<name>SYN_SODGM</name>
<evidence type="ECO:0000255" key="1">
    <source>
        <dbReference type="HAMAP-Rule" id="MF_00534"/>
    </source>
</evidence>
<protein>
    <recommendedName>
        <fullName evidence="1">Asparagine--tRNA ligase</fullName>
        <ecNumber evidence="1">6.1.1.22</ecNumber>
    </recommendedName>
    <alternativeName>
        <fullName evidence="1">Asparaginyl-tRNA synthetase</fullName>
        <shortName evidence="1">AsnRS</shortName>
    </alternativeName>
</protein>
<accession>Q2NU85</accession>
<sequence length="466" mass="52498">MSVVPVVDVLQGRMPADSEITVQGWVRTRRDSKAGISFLAVYDGSCFDPLQAVINNTLPNYQNDILRLTSGCSVSVTGRVVESLGGGQRYEIQAQAIEVLGWVDDPDTYPMAAKRHSVEYLREVAHLRPRTNLIGAVARVRHTLAQAIHRFMDEQGFFWVSTPLITASDTEGAGEMFRVSTLDLENLPRTPDGKVNYDEDFFGKEAFLTVSGQLNGESYACALSKIYTFGPTFRAENSNTSRHLAEFWMAEPEVAFATLDDAAGLAEAMLKYVFQAVLTERADDMQFFAERIDKEAINRLKQFISADFAQVDYTKAVEILQNCGQTFENPVSWGIDLSSEHERYLAEKHFKAPVVVKNYPKDIKAFYMRMNDDGKTVAAMDVLAPGIGEIIGGSQREERLDRLDQRLAEMGLNKDDYWWYRDLRRYGTVPHSGFGLGFERLIVYVTGMQNIRDVIPFPRSPRNANF</sequence>
<reference key="1">
    <citation type="journal article" date="2006" name="Genome Res.">
        <title>Massive genome erosion and functional adaptations provide insights into the symbiotic lifestyle of Sodalis glossinidius in the tsetse host.</title>
        <authorList>
            <person name="Toh H."/>
            <person name="Weiss B.L."/>
            <person name="Perkin S.A.H."/>
            <person name="Yamashita A."/>
            <person name="Oshima K."/>
            <person name="Hattori M."/>
            <person name="Aksoy S."/>
        </authorList>
    </citation>
    <scope>NUCLEOTIDE SEQUENCE [LARGE SCALE GENOMIC DNA]</scope>
    <source>
        <strain>morsitans</strain>
    </source>
</reference>